<reference key="1">
    <citation type="journal article" date="2006" name="J. Bacteriol.">
        <title>Pathogenomic sequence analysis of Bacillus cereus and Bacillus thuringiensis isolates closely related to Bacillus anthracis.</title>
        <authorList>
            <person name="Han C.S."/>
            <person name="Xie G."/>
            <person name="Challacombe J.F."/>
            <person name="Altherr M.R."/>
            <person name="Bhotika S.S."/>
            <person name="Bruce D."/>
            <person name="Campbell C.S."/>
            <person name="Campbell M.L."/>
            <person name="Chen J."/>
            <person name="Chertkov O."/>
            <person name="Cleland C."/>
            <person name="Dimitrijevic M."/>
            <person name="Doggett N.A."/>
            <person name="Fawcett J.J."/>
            <person name="Glavina T."/>
            <person name="Goodwin L.A."/>
            <person name="Hill K.K."/>
            <person name="Hitchcock P."/>
            <person name="Jackson P.J."/>
            <person name="Keim P."/>
            <person name="Kewalramani A.R."/>
            <person name="Longmire J."/>
            <person name="Lucas S."/>
            <person name="Malfatti S."/>
            <person name="McMurry K."/>
            <person name="Meincke L.J."/>
            <person name="Misra M."/>
            <person name="Moseman B.L."/>
            <person name="Mundt M."/>
            <person name="Munk A.C."/>
            <person name="Okinaka R.T."/>
            <person name="Parson-Quintana B."/>
            <person name="Reilly L.P."/>
            <person name="Richardson P."/>
            <person name="Robinson D.L."/>
            <person name="Rubin E."/>
            <person name="Saunders E."/>
            <person name="Tapia R."/>
            <person name="Tesmer J.G."/>
            <person name="Thayer N."/>
            <person name="Thompson L.S."/>
            <person name="Tice H."/>
            <person name="Ticknor L.O."/>
            <person name="Wills P.L."/>
            <person name="Brettin T.S."/>
            <person name="Gilna P."/>
        </authorList>
    </citation>
    <scope>NUCLEOTIDE SEQUENCE [LARGE SCALE GENOMIC DNA]</scope>
    <source>
        <strain>97-27</strain>
    </source>
</reference>
<comment type="function">
    <text evidence="1">Carrier protein involved in the D-alanylation of lipoteichoic acid (LTA). The loading of thioester-linked D-alanine onto DltC is catalyzed by D-alanine--D-alanyl carrier protein ligase DltA. The DltC-carried D-alanyl group is further transferred to cell membrane phosphatidylglycerol (PG) by forming an ester bond, probably catalyzed by DltD. D-alanylation of LTA plays an important role in modulating the properties of the cell wall in Gram-positive bacteria, influencing the net charge of the cell wall.</text>
</comment>
<comment type="pathway">
    <text evidence="1">Cell wall biogenesis; lipoteichoic acid biosynthesis.</text>
</comment>
<comment type="subcellular location">
    <subcellularLocation>
        <location evidence="1">Cytoplasm</location>
    </subcellularLocation>
</comment>
<comment type="PTM">
    <text evidence="1">4'-phosphopantetheine is transferred from CoA to a specific serine of apo-DCP.</text>
</comment>
<comment type="similarity">
    <text evidence="1">Belongs to the DltC family.</text>
</comment>
<gene>
    <name evidence="1" type="primary">dltC</name>
    <name type="ordered locus">BT9727_1257</name>
</gene>
<keyword id="KW-0961">Cell wall biogenesis/degradation</keyword>
<keyword id="KW-0963">Cytoplasm</keyword>
<keyword id="KW-0596">Phosphopantetheine</keyword>
<keyword id="KW-0597">Phosphoprotein</keyword>
<accession>Q6HLH9</accession>
<protein>
    <recommendedName>
        <fullName evidence="1">D-alanyl carrier protein</fullName>
        <shortName evidence="1">DCP</shortName>
    </recommendedName>
    <alternativeName>
        <fullName evidence="1">D-alanine--poly(phosphoribitol) ligase subunit 2</fullName>
    </alternativeName>
</protein>
<evidence type="ECO:0000255" key="1">
    <source>
        <dbReference type="HAMAP-Rule" id="MF_00565"/>
    </source>
</evidence>
<name>DLTC_BACHK</name>
<organism>
    <name type="scientific">Bacillus thuringiensis subsp. konkukian (strain 97-27)</name>
    <dbReference type="NCBI Taxonomy" id="281309"/>
    <lineage>
        <taxon>Bacteria</taxon>
        <taxon>Bacillati</taxon>
        <taxon>Bacillota</taxon>
        <taxon>Bacilli</taxon>
        <taxon>Bacillales</taxon>
        <taxon>Bacillaceae</taxon>
        <taxon>Bacillus</taxon>
        <taxon>Bacillus cereus group</taxon>
    </lineage>
</organism>
<proteinExistence type="inferred from homology"/>
<dbReference type="EMBL" id="AE017355">
    <property type="protein sequence ID" value="AAT63943.1"/>
    <property type="molecule type" value="Genomic_DNA"/>
</dbReference>
<dbReference type="RefSeq" id="WP_000807310.1">
    <property type="nucleotide sequence ID" value="NC_005957.1"/>
</dbReference>
<dbReference type="RefSeq" id="YP_035592.1">
    <property type="nucleotide sequence ID" value="NC_005957.1"/>
</dbReference>
<dbReference type="SMR" id="Q6HLH9"/>
<dbReference type="GeneID" id="93009671"/>
<dbReference type="KEGG" id="btk:BT9727_1257"/>
<dbReference type="PATRIC" id="fig|281309.8.peg.1322"/>
<dbReference type="HOGENOM" id="CLU_108696_19_0_9"/>
<dbReference type="UniPathway" id="UPA00556"/>
<dbReference type="PRO" id="PR:Q6HLH9"/>
<dbReference type="Proteomes" id="UP000001301">
    <property type="component" value="Chromosome"/>
</dbReference>
<dbReference type="GO" id="GO:0005737">
    <property type="term" value="C:cytoplasm"/>
    <property type="evidence" value="ECO:0007669"/>
    <property type="project" value="UniProtKB-SubCell"/>
</dbReference>
<dbReference type="GO" id="GO:0036370">
    <property type="term" value="F:D-alanyl carrier activity"/>
    <property type="evidence" value="ECO:0007669"/>
    <property type="project" value="UniProtKB-UniRule"/>
</dbReference>
<dbReference type="GO" id="GO:0071555">
    <property type="term" value="P:cell wall organization"/>
    <property type="evidence" value="ECO:0007669"/>
    <property type="project" value="UniProtKB-KW"/>
</dbReference>
<dbReference type="GO" id="GO:0070395">
    <property type="term" value="P:lipoteichoic acid biosynthetic process"/>
    <property type="evidence" value="ECO:0007669"/>
    <property type="project" value="UniProtKB-UniRule"/>
</dbReference>
<dbReference type="FunFam" id="1.10.1200.10:FF:000004">
    <property type="entry name" value="D-alanyl carrier protein"/>
    <property type="match status" value="1"/>
</dbReference>
<dbReference type="Gene3D" id="1.10.1200.10">
    <property type="entry name" value="ACP-like"/>
    <property type="match status" value="1"/>
</dbReference>
<dbReference type="HAMAP" id="MF_00565">
    <property type="entry name" value="DltC"/>
    <property type="match status" value="1"/>
</dbReference>
<dbReference type="InterPro" id="IPR036736">
    <property type="entry name" value="ACP-like_sf"/>
</dbReference>
<dbReference type="InterPro" id="IPR003230">
    <property type="entry name" value="DltC"/>
</dbReference>
<dbReference type="InterPro" id="IPR009081">
    <property type="entry name" value="PP-bd_ACP"/>
</dbReference>
<dbReference type="NCBIfam" id="TIGR01688">
    <property type="entry name" value="dltC"/>
    <property type="match status" value="1"/>
</dbReference>
<dbReference type="NCBIfam" id="NF003464">
    <property type="entry name" value="PRK05087.1"/>
    <property type="match status" value="1"/>
</dbReference>
<dbReference type="Pfam" id="PF00550">
    <property type="entry name" value="PP-binding"/>
    <property type="match status" value="1"/>
</dbReference>
<dbReference type="SUPFAM" id="SSF47336">
    <property type="entry name" value="ACP-like"/>
    <property type="match status" value="1"/>
</dbReference>
<dbReference type="PROSITE" id="PS50075">
    <property type="entry name" value="CARRIER"/>
    <property type="match status" value="1"/>
</dbReference>
<sequence length="79" mass="9261">MAEFKEQVLDILEEVCENDIVKENLDVQLFEEGILDSFAVVSLLVEFQERLDIEVSISDFDRDEWATPNMVIKKLEEIR</sequence>
<feature type="chain" id="PRO_0000213086" description="D-alanyl carrier protein">
    <location>
        <begin position="1"/>
        <end position="79"/>
    </location>
</feature>
<feature type="domain" description="Carrier" evidence="1">
    <location>
        <begin position="2"/>
        <end position="79"/>
    </location>
</feature>
<feature type="modified residue" description="O-(pantetheine 4'-phosphoryl)serine" evidence="1">
    <location>
        <position position="37"/>
    </location>
</feature>